<gene>
    <name evidence="1" type="primary">glpE</name>
    <name type="ordered locus">ECH74115_4733</name>
</gene>
<accession>B5YUH7</accession>
<dbReference type="EC" id="2.8.1.1" evidence="1"/>
<dbReference type="EMBL" id="CP001164">
    <property type="protein sequence ID" value="ACI36096.1"/>
    <property type="molecule type" value="Genomic_DNA"/>
</dbReference>
<dbReference type="RefSeq" id="WP_000371930.1">
    <property type="nucleotide sequence ID" value="NC_011353.1"/>
</dbReference>
<dbReference type="SMR" id="B5YUH7"/>
<dbReference type="KEGG" id="ecf:ECH74115_4733"/>
<dbReference type="HOGENOM" id="CLU_089574_14_0_6"/>
<dbReference type="GO" id="GO:0005737">
    <property type="term" value="C:cytoplasm"/>
    <property type="evidence" value="ECO:0007669"/>
    <property type="project" value="UniProtKB-SubCell"/>
</dbReference>
<dbReference type="GO" id="GO:0004792">
    <property type="term" value="F:thiosulfate-cyanide sulfurtransferase activity"/>
    <property type="evidence" value="ECO:0007669"/>
    <property type="project" value="UniProtKB-UniRule"/>
</dbReference>
<dbReference type="GO" id="GO:0006071">
    <property type="term" value="P:glycerol metabolic process"/>
    <property type="evidence" value="ECO:0007669"/>
    <property type="project" value="UniProtKB-UniRule"/>
</dbReference>
<dbReference type="CDD" id="cd01444">
    <property type="entry name" value="GlpE_ST"/>
    <property type="match status" value="1"/>
</dbReference>
<dbReference type="FunFam" id="3.40.250.10:FF:000007">
    <property type="entry name" value="Thiosulfate sulfurtransferase GlpE"/>
    <property type="match status" value="1"/>
</dbReference>
<dbReference type="Gene3D" id="3.40.250.10">
    <property type="entry name" value="Rhodanese-like domain"/>
    <property type="match status" value="1"/>
</dbReference>
<dbReference type="HAMAP" id="MF_01009">
    <property type="entry name" value="Thiosulf_sulfurtr"/>
    <property type="match status" value="1"/>
</dbReference>
<dbReference type="InterPro" id="IPR050229">
    <property type="entry name" value="GlpE_sulfurtransferase"/>
</dbReference>
<dbReference type="InterPro" id="IPR001763">
    <property type="entry name" value="Rhodanese-like_dom"/>
</dbReference>
<dbReference type="InterPro" id="IPR036873">
    <property type="entry name" value="Rhodanese-like_dom_sf"/>
</dbReference>
<dbReference type="InterPro" id="IPR023695">
    <property type="entry name" value="Thiosulf_sulfurTrfase"/>
</dbReference>
<dbReference type="NCBIfam" id="NF001195">
    <property type="entry name" value="PRK00162.1"/>
    <property type="match status" value="1"/>
</dbReference>
<dbReference type="PANTHER" id="PTHR43031">
    <property type="entry name" value="FAD-DEPENDENT OXIDOREDUCTASE"/>
    <property type="match status" value="1"/>
</dbReference>
<dbReference type="PANTHER" id="PTHR43031:SF6">
    <property type="entry name" value="THIOSULFATE SULFURTRANSFERASE GLPE"/>
    <property type="match status" value="1"/>
</dbReference>
<dbReference type="Pfam" id="PF00581">
    <property type="entry name" value="Rhodanese"/>
    <property type="match status" value="1"/>
</dbReference>
<dbReference type="SMART" id="SM00450">
    <property type="entry name" value="RHOD"/>
    <property type="match status" value="1"/>
</dbReference>
<dbReference type="SUPFAM" id="SSF52821">
    <property type="entry name" value="Rhodanese/Cell cycle control phosphatase"/>
    <property type="match status" value="1"/>
</dbReference>
<dbReference type="PROSITE" id="PS50206">
    <property type="entry name" value="RHODANESE_3"/>
    <property type="match status" value="1"/>
</dbReference>
<protein>
    <recommendedName>
        <fullName evidence="1">Thiosulfate sulfurtransferase GlpE</fullName>
        <ecNumber evidence="1">2.8.1.1</ecNumber>
    </recommendedName>
</protein>
<keyword id="KW-0963">Cytoplasm</keyword>
<keyword id="KW-0808">Transferase</keyword>
<name>GLPE_ECO5E</name>
<feature type="chain" id="PRO_1000134849" description="Thiosulfate sulfurtransferase GlpE">
    <location>
        <begin position="1"/>
        <end position="108"/>
    </location>
</feature>
<feature type="domain" description="Rhodanese" evidence="1">
    <location>
        <begin position="17"/>
        <end position="105"/>
    </location>
</feature>
<feature type="active site" description="Cysteine persulfide intermediate" evidence="1">
    <location>
        <position position="65"/>
    </location>
</feature>
<proteinExistence type="inferred from homology"/>
<evidence type="ECO:0000255" key="1">
    <source>
        <dbReference type="HAMAP-Rule" id="MF_01009"/>
    </source>
</evidence>
<sequence length="108" mass="12081">MDQFECINVADAHQKLQEKEAVLVDIRDPQSFAMGHAVQAFHLTNDTLGAFMRNNDFDTPVMVMCYHGNSSKGAAQYLLQQGYDVVYSIDGGFEAWQRQFPAEVAYGA</sequence>
<organism>
    <name type="scientific">Escherichia coli O157:H7 (strain EC4115 / EHEC)</name>
    <dbReference type="NCBI Taxonomy" id="444450"/>
    <lineage>
        <taxon>Bacteria</taxon>
        <taxon>Pseudomonadati</taxon>
        <taxon>Pseudomonadota</taxon>
        <taxon>Gammaproteobacteria</taxon>
        <taxon>Enterobacterales</taxon>
        <taxon>Enterobacteriaceae</taxon>
        <taxon>Escherichia</taxon>
    </lineage>
</organism>
<comment type="function">
    <text evidence="1">Transferase that catalyzes the transfer of sulfur from thiosulfate to thiophilic acceptors such as cyanide or dithiols. May function in a CysM-independent thiosulfate assimilation pathway by catalyzing the conversion of thiosulfate to sulfite, which can then be used for L-cysteine biosynthesis.</text>
</comment>
<comment type="catalytic activity">
    <reaction evidence="1">
        <text>thiosulfate + hydrogen cyanide = thiocyanate + sulfite + 2 H(+)</text>
        <dbReference type="Rhea" id="RHEA:16881"/>
        <dbReference type="ChEBI" id="CHEBI:15378"/>
        <dbReference type="ChEBI" id="CHEBI:17359"/>
        <dbReference type="ChEBI" id="CHEBI:18022"/>
        <dbReference type="ChEBI" id="CHEBI:18407"/>
        <dbReference type="ChEBI" id="CHEBI:33542"/>
        <dbReference type="EC" id="2.8.1.1"/>
    </reaction>
</comment>
<comment type="catalytic activity">
    <reaction evidence="1">
        <text>thiosulfate + [thioredoxin]-dithiol = [thioredoxin]-disulfide + hydrogen sulfide + sulfite + 2 H(+)</text>
        <dbReference type="Rhea" id="RHEA:83859"/>
        <dbReference type="Rhea" id="RHEA-COMP:10698"/>
        <dbReference type="Rhea" id="RHEA-COMP:10700"/>
        <dbReference type="ChEBI" id="CHEBI:15378"/>
        <dbReference type="ChEBI" id="CHEBI:17359"/>
        <dbReference type="ChEBI" id="CHEBI:29919"/>
        <dbReference type="ChEBI" id="CHEBI:29950"/>
        <dbReference type="ChEBI" id="CHEBI:33542"/>
        <dbReference type="ChEBI" id="CHEBI:50058"/>
    </reaction>
</comment>
<comment type="subcellular location">
    <subcellularLocation>
        <location evidence="1">Cytoplasm</location>
    </subcellularLocation>
</comment>
<comment type="similarity">
    <text evidence="1">Belongs to the GlpE family.</text>
</comment>
<reference key="1">
    <citation type="journal article" date="2011" name="Proc. Natl. Acad. Sci. U.S.A.">
        <title>Genomic anatomy of Escherichia coli O157:H7 outbreaks.</title>
        <authorList>
            <person name="Eppinger M."/>
            <person name="Mammel M.K."/>
            <person name="Leclerc J.E."/>
            <person name="Ravel J."/>
            <person name="Cebula T.A."/>
        </authorList>
    </citation>
    <scope>NUCLEOTIDE SEQUENCE [LARGE SCALE GENOMIC DNA]</scope>
    <source>
        <strain>EC4115 / EHEC</strain>
    </source>
</reference>